<feature type="chain" id="PRO_0000268647" description="Beta-catenin-like protein hmp-2" evidence="7">
    <location>
        <begin position="1"/>
        <end position="678"/>
    </location>
</feature>
<feature type="repeat" description="ARM 1">
    <location>
        <begin position="153"/>
        <end position="192"/>
    </location>
</feature>
<feature type="repeat" description="ARM 2">
    <location>
        <begin position="280"/>
        <end position="319"/>
    </location>
</feature>
<feature type="repeat" description="ARM 3">
    <location>
        <begin position="320"/>
        <end position="359"/>
    </location>
</feature>
<feature type="repeat" description="ARM 4">
    <location>
        <begin position="362"/>
        <end position="403"/>
    </location>
</feature>
<feature type="repeat" description="ARM 5">
    <location>
        <begin position="409"/>
        <end position="448"/>
    </location>
</feature>
<feature type="mutagenesis site" description="In zu364; embryonic lethal with embryos failing to elongate and displaying a humpback phenotype in which embryos contain a dorsal hump. Localizes exclusively to the cytoplasm rather than adherens junctions." evidence="4">
    <original>R</original>
    <variation>C</variation>
    <location>
        <position position="271"/>
    </location>
</feature>
<feature type="mutagenesis site" description="Phosphomimetic mutation. Initially localizes to adherens junctions, but the distribution at the junctions becomes punctate during late embryonic elongation with excursions forming orthogonal to the junctions between lateral seam cells and the dorsal and ventral neighboring cells. Defects in F-actin filament organization that include wavy and irregularly spaced filaments and the occasional aggregation of multiple bundles at single points along the adherens junction." evidence="4">
    <original>Y</original>
    <variation>E</variation>
    <location>
        <position position="599"/>
    </location>
</feature>
<feature type="mutagenesis site" description="Phospho-null mutation. No obvious phenotype." evidence="4">
    <original>Y</original>
    <variation>F</variation>
    <location>
        <position position="599"/>
    </location>
</feature>
<feature type="helix" evidence="10">
    <location>
        <begin position="48"/>
        <end position="51"/>
    </location>
</feature>
<feature type="helix" evidence="10">
    <location>
        <begin position="53"/>
        <end position="67"/>
    </location>
</feature>
<feature type="helix" evidence="9">
    <location>
        <begin position="80"/>
        <end position="89"/>
    </location>
</feature>
<feature type="helix" evidence="9">
    <location>
        <begin position="92"/>
        <end position="108"/>
    </location>
</feature>
<feature type="helix" evidence="9">
    <location>
        <begin position="110"/>
        <end position="114"/>
    </location>
</feature>
<feature type="helix" evidence="9">
    <location>
        <begin position="120"/>
        <end position="130"/>
    </location>
</feature>
<feature type="helix" evidence="9">
    <location>
        <begin position="136"/>
        <end position="149"/>
    </location>
</feature>
<feature type="helix" evidence="9">
    <location>
        <begin position="155"/>
        <end position="162"/>
    </location>
</feature>
<feature type="helix" evidence="9">
    <location>
        <begin position="165"/>
        <end position="170"/>
    </location>
</feature>
<feature type="helix" evidence="9">
    <location>
        <begin position="171"/>
        <end position="173"/>
    </location>
</feature>
<feature type="helix" evidence="9">
    <location>
        <begin position="177"/>
        <end position="193"/>
    </location>
</feature>
<feature type="helix" evidence="9">
    <location>
        <begin position="197"/>
        <end position="203"/>
    </location>
</feature>
<feature type="helix" evidence="9">
    <location>
        <begin position="206"/>
        <end position="210"/>
    </location>
</feature>
<feature type="helix" evidence="9">
    <location>
        <begin position="211"/>
        <end position="215"/>
    </location>
</feature>
<feature type="helix" evidence="9">
    <location>
        <begin position="219"/>
        <end position="233"/>
    </location>
</feature>
<feature type="helix" evidence="9">
    <location>
        <begin position="237"/>
        <end position="245"/>
    </location>
</feature>
<feature type="helix" evidence="9">
    <location>
        <begin position="248"/>
        <end position="258"/>
    </location>
</feature>
<feature type="helix" evidence="9">
    <location>
        <begin position="263"/>
        <end position="276"/>
    </location>
</feature>
<feature type="helix" evidence="9">
    <location>
        <begin position="282"/>
        <end position="288"/>
    </location>
</feature>
<feature type="helix" evidence="9">
    <location>
        <begin position="291"/>
        <end position="301"/>
    </location>
</feature>
<feature type="helix" evidence="9">
    <location>
        <begin position="305"/>
        <end position="318"/>
    </location>
</feature>
<feature type="helix" evidence="9">
    <location>
        <begin position="319"/>
        <end position="321"/>
    </location>
</feature>
<feature type="helix" evidence="9">
    <location>
        <begin position="329"/>
        <end position="338"/>
    </location>
</feature>
<feature type="turn" evidence="9">
    <location>
        <begin position="339"/>
        <end position="341"/>
    </location>
</feature>
<feature type="helix" evidence="9">
    <location>
        <begin position="344"/>
        <end position="358"/>
    </location>
</feature>
<feature type="helix" evidence="9">
    <location>
        <begin position="362"/>
        <end position="370"/>
    </location>
</feature>
<feature type="helix" evidence="9">
    <location>
        <begin position="373"/>
        <end position="383"/>
    </location>
</feature>
<feature type="helix" evidence="9">
    <location>
        <begin position="388"/>
        <end position="401"/>
    </location>
</feature>
<feature type="strand" evidence="9">
    <location>
        <begin position="403"/>
        <end position="405"/>
    </location>
</feature>
<feature type="helix" evidence="9">
    <location>
        <begin position="408"/>
        <end position="417"/>
    </location>
</feature>
<feature type="helix" evidence="9">
    <location>
        <begin position="421"/>
        <end position="428"/>
    </location>
</feature>
<feature type="helix" evidence="9">
    <location>
        <begin position="433"/>
        <end position="446"/>
    </location>
</feature>
<feature type="helix" evidence="9">
    <location>
        <begin position="452"/>
        <end position="458"/>
    </location>
</feature>
<feature type="helix" evidence="9">
    <location>
        <begin position="467"/>
        <end position="484"/>
    </location>
</feature>
<feature type="helix" evidence="9">
    <location>
        <begin position="495"/>
        <end position="509"/>
    </location>
</feature>
<feature type="helix" evidence="9">
    <location>
        <begin position="513"/>
        <end position="521"/>
    </location>
</feature>
<feature type="helix" evidence="9">
    <location>
        <begin position="534"/>
        <end position="542"/>
    </location>
</feature>
<feature type="helix" evidence="9">
    <location>
        <begin position="545"/>
        <end position="548"/>
    </location>
</feature>
<feature type="helix" evidence="9">
    <location>
        <begin position="554"/>
        <end position="566"/>
    </location>
</feature>
<feature type="helix" evidence="9">
    <location>
        <begin position="570"/>
        <end position="577"/>
    </location>
</feature>
<feature type="turn" evidence="9">
    <location>
        <begin position="578"/>
        <end position="580"/>
    </location>
</feature>
<feature type="helix" evidence="9">
    <location>
        <begin position="582"/>
        <end position="588"/>
    </location>
</feature>
<feature type="helix" evidence="9">
    <location>
        <begin position="594"/>
        <end position="611"/>
    </location>
</feature>
<keyword id="KW-0002">3D-structure</keyword>
<keyword id="KW-0130">Cell adhesion</keyword>
<keyword id="KW-0965">Cell junction</keyword>
<keyword id="KW-0217">Developmental protein</keyword>
<keyword id="KW-1185">Reference proteome</keyword>
<keyword id="KW-0677">Repeat</keyword>
<organism>
    <name type="scientific">Caenorhabditis elegans</name>
    <dbReference type="NCBI Taxonomy" id="6239"/>
    <lineage>
        <taxon>Eukaryota</taxon>
        <taxon>Metazoa</taxon>
        <taxon>Ecdysozoa</taxon>
        <taxon>Nematoda</taxon>
        <taxon>Chromadorea</taxon>
        <taxon>Rhabditida</taxon>
        <taxon>Rhabditina</taxon>
        <taxon>Rhabditomorpha</taxon>
        <taxon>Rhabditoidea</taxon>
        <taxon>Rhabditidae</taxon>
        <taxon>Peloderinae</taxon>
        <taxon>Caenorhabditis</taxon>
    </lineage>
</organism>
<dbReference type="EMBL" id="AF016853">
    <property type="protein sequence ID" value="AAB94552.1"/>
    <property type="molecule type" value="mRNA"/>
</dbReference>
<dbReference type="EMBL" id="Z81564">
    <property type="protein sequence ID" value="CAB04572.1"/>
    <property type="molecule type" value="Genomic_DNA"/>
</dbReference>
<dbReference type="PIR" id="T23341">
    <property type="entry name" value="T23341"/>
</dbReference>
<dbReference type="RefSeq" id="NP_001252426.1">
    <property type="nucleotide sequence ID" value="NM_001265497.4"/>
</dbReference>
<dbReference type="PDB" id="4R0Z">
    <property type="method" value="X-ray"/>
    <property type="resolution" value="2.00 A"/>
    <property type="chains" value="A=53-678"/>
</dbReference>
<dbReference type="PDB" id="4R10">
    <property type="method" value="X-ray"/>
    <property type="resolution" value="2.30 A"/>
    <property type="chains" value="A=53-621"/>
</dbReference>
<dbReference type="PDB" id="4R11">
    <property type="method" value="X-ray"/>
    <property type="resolution" value="2.79 A"/>
    <property type="chains" value="A/C/E=53-621"/>
</dbReference>
<dbReference type="PDB" id="5XA5">
    <property type="method" value="X-ray"/>
    <property type="resolution" value="1.60 A"/>
    <property type="chains" value="B=36-79"/>
</dbReference>
<dbReference type="PDBsum" id="4R0Z"/>
<dbReference type="PDBsum" id="4R10"/>
<dbReference type="PDBsum" id="4R11"/>
<dbReference type="PDBsum" id="5XA5"/>
<dbReference type="SMR" id="O44326"/>
<dbReference type="BioGRID" id="38723">
    <property type="interactions" value="34"/>
</dbReference>
<dbReference type="ComplexPortal" id="CPX-499">
    <property type="entry name" value="Catenin-Cadherin complex"/>
</dbReference>
<dbReference type="DIP" id="DIP-27261N"/>
<dbReference type="FunCoup" id="O44326">
    <property type="interactions" value="2127"/>
</dbReference>
<dbReference type="IntAct" id="O44326">
    <property type="interactions" value="5"/>
</dbReference>
<dbReference type="STRING" id="6239.K05C4.6b.1"/>
<dbReference type="iPTMnet" id="O44326"/>
<dbReference type="PaxDb" id="6239-K05C4.6b"/>
<dbReference type="EnsemblMetazoa" id="K05C4.6a.1">
    <property type="protein sequence ID" value="K05C4.6a.1"/>
    <property type="gene ID" value="WBGene00001979"/>
</dbReference>
<dbReference type="GeneID" id="173338"/>
<dbReference type="KEGG" id="cel:CELE_K05C4.6"/>
<dbReference type="UCSC" id="K05C4.6">
    <property type="organism name" value="c. elegans"/>
</dbReference>
<dbReference type="AGR" id="WB:WBGene00001979"/>
<dbReference type="CTD" id="173338"/>
<dbReference type="WormBase" id="K05C4.6a">
    <property type="protein sequence ID" value="CE19974"/>
    <property type="gene ID" value="WBGene00001979"/>
    <property type="gene designation" value="hmp-2"/>
</dbReference>
<dbReference type="eggNOG" id="KOG4203">
    <property type="taxonomic scope" value="Eukaryota"/>
</dbReference>
<dbReference type="GeneTree" id="ENSGT00940000171121"/>
<dbReference type="HOGENOM" id="CLU_008757_1_1_1"/>
<dbReference type="InParanoid" id="O44326"/>
<dbReference type="OrthoDB" id="195736at2759"/>
<dbReference type="PhylomeDB" id="O44326"/>
<dbReference type="Reactome" id="R-CEL-195253">
    <property type="pathway name" value="Degradation of beta-catenin by the destruction complex"/>
</dbReference>
<dbReference type="Reactome" id="R-CEL-196299">
    <property type="pathway name" value="Beta-catenin phosphorylation cascade"/>
</dbReference>
<dbReference type="Reactome" id="R-CEL-201681">
    <property type="pathway name" value="TCF dependent signaling in response to WNT"/>
</dbReference>
<dbReference type="Reactome" id="R-CEL-201722">
    <property type="pathway name" value="Formation of the beta-catenin:TCF transactivating complex"/>
</dbReference>
<dbReference type="Reactome" id="R-CEL-3134973">
    <property type="pathway name" value="LRR FLII-interacting protein 1 (LRRFIP1) activates type I IFN production"/>
</dbReference>
<dbReference type="Reactome" id="R-CEL-351906">
    <property type="pathway name" value="Apoptotic cleavage of cell adhesion proteins"/>
</dbReference>
<dbReference type="Reactome" id="R-CEL-3769402">
    <property type="pathway name" value="Deactivation of the beta-catenin transactivating complex"/>
</dbReference>
<dbReference type="Reactome" id="R-CEL-4086398">
    <property type="pathway name" value="Ca2+ pathway"/>
</dbReference>
<dbReference type="Reactome" id="R-CEL-5218920">
    <property type="pathway name" value="VEGFR2 mediated vascular permeability"/>
</dbReference>
<dbReference type="Reactome" id="R-CEL-6798695">
    <property type="pathway name" value="Neutrophil degranulation"/>
</dbReference>
<dbReference type="Reactome" id="R-CEL-6809371">
    <property type="pathway name" value="Formation of the cornified envelope"/>
</dbReference>
<dbReference type="Reactome" id="R-CEL-8853884">
    <property type="pathway name" value="Transcriptional Regulation by VENTX"/>
</dbReference>
<dbReference type="Reactome" id="R-CEL-8951430">
    <property type="pathway name" value="RUNX3 regulates WNT signaling"/>
</dbReference>
<dbReference type="Reactome" id="R-CEL-8980692">
    <property type="pathway name" value="RHOA GTPase cycle"/>
</dbReference>
<dbReference type="Reactome" id="R-CEL-9013026">
    <property type="pathway name" value="RHOB GTPase cycle"/>
</dbReference>
<dbReference type="Reactome" id="R-CEL-9013406">
    <property type="pathway name" value="RHOQ GTPase cycle"/>
</dbReference>
<dbReference type="Reactome" id="R-CEL-9013407">
    <property type="pathway name" value="RHOH GTPase cycle"/>
</dbReference>
<dbReference type="Reactome" id="R-CEL-9825892">
    <property type="pathway name" value="Regulation of MITF-M-dependent genes involved in cell cycle and proliferation"/>
</dbReference>
<dbReference type="SignaLink" id="O44326"/>
<dbReference type="EvolutionaryTrace" id="O44326"/>
<dbReference type="PRO" id="PR:O44326"/>
<dbReference type="Proteomes" id="UP000001940">
    <property type="component" value="Chromosome I"/>
</dbReference>
<dbReference type="Bgee" id="WBGene00001979">
    <property type="expression patterns" value="Expressed in pharyngeal muscle cell (C elegans) and 4 other cell types or tissues"/>
</dbReference>
<dbReference type="ExpressionAtlas" id="O44326">
    <property type="expression patterns" value="baseline and differential"/>
</dbReference>
<dbReference type="GO" id="GO:0005912">
    <property type="term" value="C:adherens junction"/>
    <property type="evidence" value="ECO:0000314"/>
    <property type="project" value="WormBase"/>
</dbReference>
<dbReference type="GO" id="GO:0016342">
    <property type="term" value="C:catenin complex"/>
    <property type="evidence" value="ECO:0000314"/>
    <property type="project" value="WormBase"/>
</dbReference>
<dbReference type="GO" id="GO:0005737">
    <property type="term" value="C:cytoplasm"/>
    <property type="evidence" value="ECO:0000318"/>
    <property type="project" value="GO_Central"/>
</dbReference>
<dbReference type="GO" id="GO:0005634">
    <property type="term" value="C:nucleus"/>
    <property type="evidence" value="ECO:0000314"/>
    <property type="project" value="WormBase"/>
</dbReference>
<dbReference type="GO" id="GO:0045294">
    <property type="term" value="F:alpha-catenin binding"/>
    <property type="evidence" value="ECO:0000353"/>
    <property type="project" value="WormBase"/>
</dbReference>
<dbReference type="GO" id="GO:0045296">
    <property type="term" value="F:cadherin binding"/>
    <property type="evidence" value="ECO:0000353"/>
    <property type="project" value="WormBase"/>
</dbReference>
<dbReference type="GO" id="GO:0140678">
    <property type="term" value="F:molecular function inhibitor activity"/>
    <property type="evidence" value="ECO:0000353"/>
    <property type="project" value="DisProt"/>
</dbReference>
<dbReference type="GO" id="GO:0016922">
    <property type="term" value="F:nuclear receptor binding"/>
    <property type="evidence" value="ECO:0000318"/>
    <property type="project" value="GO_Central"/>
</dbReference>
<dbReference type="GO" id="GO:0019904">
    <property type="term" value="F:protein domain specific binding"/>
    <property type="evidence" value="ECO:0000353"/>
    <property type="project" value="WormBase"/>
</dbReference>
<dbReference type="GO" id="GO:0019901">
    <property type="term" value="F:protein kinase binding"/>
    <property type="evidence" value="ECO:0000353"/>
    <property type="project" value="WormBase"/>
</dbReference>
<dbReference type="GO" id="GO:0019903">
    <property type="term" value="F:protein phosphatase binding"/>
    <property type="evidence" value="ECO:0000318"/>
    <property type="project" value="GO_Central"/>
</dbReference>
<dbReference type="GO" id="GO:0003713">
    <property type="term" value="F:transcription coactivator activity"/>
    <property type="evidence" value="ECO:0000314"/>
    <property type="project" value="WormBase"/>
</dbReference>
<dbReference type="GO" id="GO:0060070">
    <property type="term" value="P:canonical Wnt signaling pathway"/>
    <property type="evidence" value="ECO:0000316"/>
    <property type="project" value="UniProtKB"/>
</dbReference>
<dbReference type="GO" id="GO:0016477">
    <property type="term" value="P:cell migration"/>
    <property type="evidence" value="ECO:0000315"/>
    <property type="project" value="WormBase"/>
</dbReference>
<dbReference type="GO" id="GO:0042074">
    <property type="term" value="P:cell migration involved in gastrulation"/>
    <property type="evidence" value="ECO:0000316"/>
    <property type="project" value="WormBase"/>
</dbReference>
<dbReference type="GO" id="GO:0098609">
    <property type="term" value="P:cell-cell adhesion"/>
    <property type="evidence" value="ECO:0000318"/>
    <property type="project" value="GO_Central"/>
</dbReference>
<dbReference type="GO" id="GO:0044331">
    <property type="term" value="P:cell-cell adhesion mediated by cadherin"/>
    <property type="evidence" value="ECO:0000269"/>
    <property type="project" value="ComplexPortal"/>
</dbReference>
<dbReference type="GO" id="GO:0030866">
    <property type="term" value="P:cortical actin cytoskeleton organization"/>
    <property type="evidence" value="ECO:0000315"/>
    <property type="project" value="WormBase"/>
</dbReference>
<dbReference type="GO" id="GO:0009792">
    <property type="term" value="P:embryo development ending in birth or egg hatching"/>
    <property type="evidence" value="ECO:0000315"/>
    <property type="project" value="WormBase"/>
</dbReference>
<dbReference type="GO" id="GO:0010172">
    <property type="term" value="P:embryonic body morphogenesis"/>
    <property type="evidence" value="ECO:0000315"/>
    <property type="project" value="WormBase"/>
</dbReference>
<dbReference type="GO" id="GO:0000132">
    <property type="term" value="P:establishment of mitotic spindle orientation"/>
    <property type="evidence" value="ECO:0000316"/>
    <property type="project" value="UniProtKB"/>
</dbReference>
<dbReference type="GO" id="GO:0070986">
    <property type="term" value="P:left/right axis specification"/>
    <property type="evidence" value="ECO:0000316"/>
    <property type="project" value="UniProtKB"/>
</dbReference>
<dbReference type="GO" id="GO:0051782">
    <property type="term" value="P:negative regulation of cell division"/>
    <property type="evidence" value="ECO:0000316"/>
    <property type="project" value="UniProtKB"/>
</dbReference>
<dbReference type="GO" id="GO:0045944">
    <property type="term" value="P:positive regulation of transcription by RNA polymerase II"/>
    <property type="evidence" value="ECO:0000314"/>
    <property type="project" value="WormBase"/>
</dbReference>
<dbReference type="GO" id="GO:0032880">
    <property type="term" value="P:regulation of protein localization"/>
    <property type="evidence" value="ECO:0000315"/>
    <property type="project" value="WormBase"/>
</dbReference>
<dbReference type="CDD" id="cd21719">
    <property type="entry name" value="CTNNAbd_CTNNB1-like"/>
    <property type="match status" value="1"/>
</dbReference>
<dbReference type="FunFam" id="1.25.10.10:FF:000713">
    <property type="entry name" value="Beta-catenin-like protein hmp-2"/>
    <property type="match status" value="1"/>
</dbReference>
<dbReference type="Gene3D" id="1.25.10.10">
    <property type="entry name" value="Leucine-rich Repeat Variant"/>
    <property type="match status" value="1"/>
</dbReference>
<dbReference type="InterPro" id="IPR011989">
    <property type="entry name" value="ARM-like"/>
</dbReference>
<dbReference type="InterPro" id="IPR016024">
    <property type="entry name" value="ARM-type_fold"/>
</dbReference>
<dbReference type="InterPro" id="IPR000225">
    <property type="entry name" value="Armadillo"/>
</dbReference>
<dbReference type="InterPro" id="IPR013284">
    <property type="entry name" value="Beta-catenin"/>
</dbReference>
<dbReference type="PANTHER" id="PTHR45976">
    <property type="entry name" value="ARMADILLO SEGMENT POLARITY PROTEIN"/>
    <property type="match status" value="1"/>
</dbReference>
<dbReference type="Pfam" id="PF00514">
    <property type="entry name" value="Arm"/>
    <property type="match status" value="2"/>
</dbReference>
<dbReference type="PRINTS" id="PR01869">
    <property type="entry name" value="BCATNINFAMLY"/>
</dbReference>
<dbReference type="SMART" id="SM00185">
    <property type="entry name" value="ARM"/>
    <property type="match status" value="8"/>
</dbReference>
<dbReference type="SUPFAM" id="SSF48371">
    <property type="entry name" value="ARM repeat"/>
    <property type="match status" value="1"/>
</dbReference>
<dbReference type="PROSITE" id="PS50176">
    <property type="entry name" value="ARM_REPEAT"/>
    <property type="match status" value="1"/>
</dbReference>
<reference key="1">
    <citation type="journal article" date="1998" name="J. Cell Biol.">
        <title>A putative catenin-cadherin system mediates morphogenesis of the Caenorhabditis elegans embryo.</title>
        <authorList>
            <person name="Costa M."/>
            <person name="Raich W."/>
            <person name="Agbunag C."/>
            <person name="Leung B."/>
            <person name="Hardin J."/>
            <person name="Priess J.R."/>
        </authorList>
    </citation>
    <scope>NUCLEOTIDE SEQUENCE [MRNA]</scope>
    <scope>FUNCTION</scope>
    <scope>DEVELOPMENTAL STAGE</scope>
    <scope>TISSUE SPECIFICITY</scope>
    <scope>SUBCELLULAR LOCATION</scope>
    <scope>DISRUPTION PHENOTYPE</scope>
    <source>
        <strain>Bristol N2</strain>
    </source>
</reference>
<reference key="2">
    <citation type="journal article" date="1998" name="Science">
        <title>Genome sequence of the nematode C. elegans: a platform for investigating biology.</title>
        <authorList>
            <consortium name="The C. elegans sequencing consortium"/>
        </authorList>
    </citation>
    <scope>NUCLEOTIDE SEQUENCE [LARGE SCALE GENOMIC DNA]</scope>
    <source>
        <strain>Bristol N2</strain>
    </source>
</reference>
<reference key="3">
    <citation type="journal article" date="2000" name="Nature">
        <title>Distinct beta-catenins mediate adhesion and signalling functions in C. elegans.</title>
        <authorList>
            <person name="Korswagen H.C."/>
            <person name="Herman M.A."/>
            <person name="Clevers H.C."/>
        </authorList>
    </citation>
    <scope>INTERACTION WITH HMR-1</scope>
</reference>
<reference key="4">
    <citation type="journal article" date="2001" name="Genetics">
        <title>The divergent Caenorhabditis elegans beta-catenin proteins BAR-1, WRM-1 and HMP-2 make distinct protein interactions but retain functional redundancy in vivo.</title>
        <authorList>
            <person name="Natarajan L."/>
            <person name="Witwer N.E."/>
            <person name="Eisenmann D.M."/>
        </authorList>
    </citation>
    <scope>POSSIBLE INTERACTION WITH HMP-1</scope>
</reference>
<reference key="5">
    <citation type="journal article" date="2010" name="Proc. Natl. Acad. Sci. U.S.A.">
        <title>Repression of Wnt signaling by a Fer-type nonreceptor tyrosine kinase.</title>
        <authorList>
            <person name="Putzke A.P."/>
            <person name="Rothman J.H."/>
        </authorList>
    </citation>
    <scope>INTERACTION WITH FRK-1</scope>
</reference>
<reference key="6">
    <citation type="journal article" date="2015" name="Dev. Cell">
        <title>ULP-2 SUMO Protease Regulates E-Cadherin Recruitment to Adherens Junctions.</title>
        <authorList>
            <person name="Tsur A."/>
            <person name="Bening Abu-Shach U."/>
            <person name="Broday L."/>
        </authorList>
    </citation>
    <scope>FUNCTION</scope>
    <scope>INTERACTION WITH HMR-1</scope>
    <scope>DISRUPTION PHENOTYPE</scope>
</reference>
<reference key="7">
    <citation type="journal article" date="2015" name="Dev. Cell">
        <title>A conserved phosphorylation switch controls the interaction between cadherin and beta-catenin in vitro and in vivo.</title>
        <authorList>
            <person name="Choi H.J."/>
            <person name="Loveless T."/>
            <person name="Lynch A.M."/>
            <person name="Bang I."/>
            <person name="Hardin J."/>
            <person name="Weis W.I."/>
        </authorList>
    </citation>
    <scope>X-RAY CRYSTALLOGRAPHY (2.00 ANGSTROMS) OF 54-678 IN COMPLEX WITH HMR-1</scope>
    <scope>IDENTIFICATION IN CATENIN-CADHERIN COMPLEX</scope>
    <scope>SUBCELLULAR LOCATION</scope>
    <scope>MUTAGENESIS OF ARG-271 AND TYR-599</scope>
</reference>
<proteinExistence type="evidence at protein level"/>
<name>HMP2_CAEEL</name>
<protein>
    <recommendedName>
        <fullName evidence="7">Beta-catenin-like protein hmp-2</fullName>
    </recommendedName>
    <alternativeName>
        <fullName evidence="8">Protein humpback-2</fullName>
    </alternativeName>
</protein>
<sequence>MLLHSTNSYSIFTDHEVETRTSRIRSAMFPDWIPPTSAAEATNSTTSIVEMMQMPTQQLKQSVMDLLTYEGSNDMSGLSLPDLVKLMCDHDESVVARAVHRAYMLSREDPNFFNAPGFDHRSFVEALMAASKSSNVNVRRNAIGALSHMSEQRGGPLLIFRSGGLAEIIRMLYDSLESVVHYAVTTLRNLLMHVSDSRAQARALNAVEALTPHLHKTNPKLLAQVADGLYFLLIDDAPSKITFLSLLGPQILVSILREYSDHRKLIYTVVRCIRSLSVCPSNKPALISLGCLPALYVELCTAKDERSQTAILVAMRNLSDSATNEENLTQLIIKLLEIIRVANDGMTACACGTLSNLTCNNTRNKQTVCSHGGIDALVTAIRRLPEVEEVTEPALCALRHCTARHSLAEEAQSELRFCQAFPVILDQLETLRTPVIKAALGVIRNSALLQTNLIELTQEQTANGHTAVSLTMDILRRAITAIEENPDIAVDGVPMWGVIEGAVSALHQLANHPAVAAACCDDIGQVGNPECPPFLDLLHRLLAHPRLGSMDDEVLEREILGLLYQLSKRPDGARAVESTGVSALLMESRGSQYKSVVTYANGVLSNLKRGDSAAIMNMSNSYDYEMSGSAADWQRDGLERELFAEMYPTNDGGHSESINMALNNSQMRPNHNWYDTDL</sequence>
<comment type="function">
    <text evidence="5 6">Required for cell migration during body enclosure and cell shape changes during body elongation (PubMed:9531567). Plays a role in recruitment of the cadherin protein hmr-1 to adherens junctions (PubMed:26412237).</text>
</comment>
<comment type="subunit">
    <text evidence="1 2 3 4 5">Component of a core catenin-cadherin complex consisting of hmr-1, hmp-1 and hmp-2; the complex localizes to adherens junctions (PubMed:25850673). Interacts with hmr-1; the interaction is direct (PubMed:10952315, PubMed:25850673, PubMed:26412237). May interact with hmp-1 (PubMed:11560894). Interacts with frk-1 (PubMed:20805471).</text>
</comment>
<comment type="interaction">
    <interactant intactId="EBI-317320">
        <id>O44326</id>
    </interactant>
    <interactant intactId="EBI-2528888">
        <id>Q967F4</id>
        <label>hmr-1</label>
    </interactant>
    <organismsDiffer>false</organismsDiffer>
    <experiments>5</experiments>
</comment>
<comment type="subcellular location">
    <subcellularLocation>
        <location evidence="4 6">Cell junction</location>
        <location evidence="4 6">Adherens junction</location>
    </subcellularLocation>
</comment>
<comment type="tissue specificity">
    <text evidence="6">Epidermal cells.</text>
</comment>
<comment type="developmental stage">
    <text evidence="6">Present in all embryonic blastomeres at early stages of development (at protein level).</text>
</comment>
<comment type="disruption phenotype">
    <text evidence="5 6">Worms have strong elongation defects (PubMed:9531567). RNAi-mediated knockdown results in failure of cadherin protein hmr-1 to localize to adherens junctions, but results in its accumulation along the basolateral membrane of the cell (PubMed:26412237).</text>
</comment>
<comment type="similarity">
    <text evidence="7">Belongs to the beta-catenin family.</text>
</comment>
<gene>
    <name type="primary">hmp-2</name>
    <name type="ORF">K05C4.6</name>
</gene>
<evidence type="ECO:0000269" key="1">
    <source>
    </source>
</evidence>
<evidence type="ECO:0000269" key="2">
    <source>
    </source>
</evidence>
<evidence type="ECO:0000269" key="3">
    <source>
    </source>
</evidence>
<evidence type="ECO:0000269" key="4">
    <source>
    </source>
</evidence>
<evidence type="ECO:0000269" key="5">
    <source>
    </source>
</evidence>
<evidence type="ECO:0000269" key="6">
    <source>
    </source>
</evidence>
<evidence type="ECO:0000305" key="7"/>
<evidence type="ECO:0000312" key="8">
    <source>
        <dbReference type="WormBase" id="K05C4.6a"/>
    </source>
</evidence>
<evidence type="ECO:0007829" key="9">
    <source>
        <dbReference type="PDB" id="4R0Z"/>
    </source>
</evidence>
<evidence type="ECO:0007829" key="10">
    <source>
        <dbReference type="PDB" id="5XA5"/>
    </source>
</evidence>
<accession>O44326</accession>